<organism>
    <name type="scientific">Candida albicans (strain SC5314 / ATCC MYA-2876)</name>
    <name type="common">Yeast</name>
    <dbReference type="NCBI Taxonomy" id="237561"/>
    <lineage>
        <taxon>Eukaryota</taxon>
        <taxon>Fungi</taxon>
        <taxon>Dikarya</taxon>
        <taxon>Ascomycota</taxon>
        <taxon>Saccharomycotina</taxon>
        <taxon>Pichiomycetes</taxon>
        <taxon>Debaryomycetaceae</taxon>
        <taxon>Candida/Lodderomyces clade</taxon>
        <taxon>Candida</taxon>
    </lineage>
</organism>
<name>SDHF3_CANAL</name>
<feature type="transit peptide" description="Mitochondrion" evidence="3">
    <location>
        <begin position="1"/>
        <end position="47"/>
    </location>
</feature>
<feature type="chain" id="PRO_0000042742" description="Succinate dehydrogenase assembly factor 3, mitochondrial">
    <location>
        <begin position="48"/>
        <end position="122"/>
    </location>
</feature>
<proteinExistence type="inferred from homology"/>
<gene>
    <name evidence="1" type="primary">SDH7</name>
    <name type="ordered locus">CAALFM_C600090WA</name>
    <name type="ORF">CaO19.6328</name>
</gene>
<comment type="function">
    <text evidence="1 2">Plays an essential role in the assembly of succinate dehydrogenase (SDH), an enzyme complex (also referred to as respiratory complex II) that is a component of both the tricarboxylic acid (TCA) cycle and the mitochondrial electron transport chain, and which couples the oxidation of succinate to fumarate with the reduction of ubiquinone (coenzyme Q) to ubiquinol. Promotes maturation of the iron-sulfur protein subunit of the SDH catalytic dimer, protecting it from the deleterious effects of oxidants. May act together with SDHAF1.</text>
</comment>
<comment type="subunit">
    <text evidence="1">Interacts with the iron-sulfur protein subunit within the SDH catalytic dimer.</text>
</comment>
<comment type="subcellular location">
    <subcellularLocation>
        <location evidence="1">Mitochondrion matrix</location>
    </subcellularLocation>
</comment>
<comment type="similarity">
    <text evidence="4">Belongs to the complex I LYR family. SDHAF3 subfamily.</text>
</comment>
<protein>
    <recommendedName>
        <fullName evidence="1">Succinate dehydrogenase assembly factor 3, mitochondrial</fullName>
        <shortName evidence="1">SDH assembly factor 3</shortName>
        <shortName evidence="1">SDHAF3</shortName>
    </recommendedName>
</protein>
<sequence>MHPSVVRLVKPRRPERITSPILPPLPLYRAILRAHHRKLPQELRYLGDQYVKKEFKDHKKIDNPLHIVGFLTEWQDYLKQIDGGSWSHGKLSKDDLDKMSPEQIGQLHELMEATKKIGEESI</sequence>
<evidence type="ECO:0000250" key="1">
    <source>
        <dbReference type="UniProtKB" id="Q04401"/>
    </source>
</evidence>
<evidence type="ECO:0000250" key="2">
    <source>
        <dbReference type="UniProtKB" id="Q8SZ16"/>
    </source>
</evidence>
<evidence type="ECO:0000255" key="3"/>
<evidence type="ECO:0000305" key="4"/>
<accession>Q59L89</accession>
<accession>A0A1D8PPA0</accession>
<reference key="1">
    <citation type="journal article" date="2004" name="Proc. Natl. Acad. Sci. U.S.A.">
        <title>The diploid genome sequence of Candida albicans.</title>
        <authorList>
            <person name="Jones T."/>
            <person name="Federspiel N.A."/>
            <person name="Chibana H."/>
            <person name="Dungan J."/>
            <person name="Kalman S."/>
            <person name="Magee B.B."/>
            <person name="Newport G."/>
            <person name="Thorstenson Y.R."/>
            <person name="Agabian N."/>
            <person name="Magee P.T."/>
            <person name="Davis R.W."/>
            <person name="Scherer S."/>
        </authorList>
    </citation>
    <scope>NUCLEOTIDE SEQUENCE [LARGE SCALE GENOMIC DNA]</scope>
    <source>
        <strain>SC5314 / ATCC MYA-2876</strain>
    </source>
</reference>
<reference key="2">
    <citation type="journal article" date="2007" name="Genome Biol.">
        <title>Assembly of the Candida albicans genome into sixteen supercontigs aligned on the eight chromosomes.</title>
        <authorList>
            <person name="van het Hoog M."/>
            <person name="Rast T.J."/>
            <person name="Martchenko M."/>
            <person name="Grindle S."/>
            <person name="Dignard D."/>
            <person name="Hogues H."/>
            <person name="Cuomo C."/>
            <person name="Berriman M."/>
            <person name="Scherer S."/>
            <person name="Magee B.B."/>
            <person name="Whiteway M."/>
            <person name="Chibana H."/>
            <person name="Nantel A."/>
            <person name="Magee P.T."/>
        </authorList>
    </citation>
    <scope>GENOME REANNOTATION</scope>
    <source>
        <strain>SC5314 / ATCC MYA-2876</strain>
    </source>
</reference>
<reference key="3">
    <citation type="journal article" date="2013" name="Genome Biol.">
        <title>Assembly of a phased diploid Candida albicans genome facilitates allele-specific measurements and provides a simple model for repeat and indel structure.</title>
        <authorList>
            <person name="Muzzey D."/>
            <person name="Schwartz K."/>
            <person name="Weissman J.S."/>
            <person name="Sherlock G."/>
        </authorList>
    </citation>
    <scope>NUCLEOTIDE SEQUENCE [LARGE SCALE GENOMIC DNA]</scope>
    <scope>GENOME REANNOTATION</scope>
    <source>
        <strain>SC5314 / ATCC MYA-2876</strain>
    </source>
</reference>
<dbReference type="EMBL" id="CP017628">
    <property type="protein sequence ID" value="AOW29959.1"/>
    <property type="molecule type" value="Genomic_DNA"/>
</dbReference>
<dbReference type="RefSeq" id="XP_710499.1">
    <property type="nucleotide sequence ID" value="XM_705407.1"/>
</dbReference>
<dbReference type="SMR" id="Q59L89"/>
<dbReference type="FunCoup" id="Q59L89">
    <property type="interactions" value="274"/>
</dbReference>
<dbReference type="STRING" id="237561.Q59L89"/>
<dbReference type="EnsemblFungi" id="C6_00090W_A-T">
    <property type="protein sequence ID" value="C6_00090W_A-T-p1"/>
    <property type="gene ID" value="C6_00090W_A"/>
</dbReference>
<dbReference type="GeneID" id="3647898"/>
<dbReference type="KEGG" id="cal:CAALFM_C600090WA"/>
<dbReference type="CGD" id="CAL0000193085">
    <property type="gene designation" value="orf19.6328"/>
</dbReference>
<dbReference type="VEuPathDB" id="FungiDB:C6_00090W_A"/>
<dbReference type="HOGENOM" id="CLU_102310_1_0_1"/>
<dbReference type="InParanoid" id="Q59L89"/>
<dbReference type="OMA" id="WQQTNEN"/>
<dbReference type="OrthoDB" id="278329at2759"/>
<dbReference type="Proteomes" id="UP000000559">
    <property type="component" value="Chromosome 6"/>
</dbReference>
<dbReference type="GO" id="GO:0005758">
    <property type="term" value="C:mitochondrial intermembrane space"/>
    <property type="evidence" value="ECO:0000318"/>
    <property type="project" value="GO_Central"/>
</dbReference>
<dbReference type="GO" id="GO:0005759">
    <property type="term" value="C:mitochondrial matrix"/>
    <property type="evidence" value="ECO:0007669"/>
    <property type="project" value="UniProtKB-SubCell"/>
</dbReference>
<dbReference type="GO" id="GO:0015976">
    <property type="term" value="P:carbon utilization"/>
    <property type="evidence" value="ECO:0007669"/>
    <property type="project" value="EnsemblFungi"/>
</dbReference>
<dbReference type="GO" id="GO:0006094">
    <property type="term" value="P:gluconeogenesis"/>
    <property type="evidence" value="ECO:0007669"/>
    <property type="project" value="UniProtKB-KW"/>
</dbReference>
<dbReference type="GO" id="GO:0034553">
    <property type="term" value="P:mitochondrial respiratory chain complex II assembly"/>
    <property type="evidence" value="ECO:0000318"/>
    <property type="project" value="GO_Central"/>
</dbReference>
<dbReference type="GO" id="GO:0006111">
    <property type="term" value="P:regulation of gluconeogenesis"/>
    <property type="evidence" value="ECO:0007669"/>
    <property type="project" value="EnsemblFungi"/>
</dbReference>
<dbReference type="GO" id="GO:0006105">
    <property type="term" value="P:succinate metabolic process"/>
    <property type="evidence" value="ECO:0000318"/>
    <property type="project" value="GO_Central"/>
</dbReference>
<dbReference type="CDD" id="cd20270">
    <property type="entry name" value="Complex1_LYR_SDHAF3_LYRM10"/>
    <property type="match status" value="1"/>
</dbReference>
<dbReference type="InterPro" id="IPR008381">
    <property type="entry name" value="SDHAF3/Sdh7"/>
</dbReference>
<dbReference type="PANTHER" id="PTHR13137">
    <property type="entry name" value="DC11 ACN9 HOMOLOG"/>
    <property type="match status" value="1"/>
</dbReference>
<dbReference type="PANTHER" id="PTHR13137:SF6">
    <property type="entry name" value="SUCCINATE DEHYDROGENASE ASSEMBLY FACTOR 3, MITOCHONDRIAL"/>
    <property type="match status" value="1"/>
</dbReference>
<dbReference type="Pfam" id="PF13233">
    <property type="entry name" value="Complex1_LYR_2"/>
    <property type="match status" value="1"/>
</dbReference>
<keyword id="KW-0143">Chaperone</keyword>
<keyword id="KW-0312">Gluconeogenesis</keyword>
<keyword id="KW-0496">Mitochondrion</keyword>
<keyword id="KW-1185">Reference proteome</keyword>
<keyword id="KW-0809">Transit peptide</keyword>